<organism>
    <name type="scientific">Pyrobaculum aerophilum (strain ATCC 51768 / DSM 7523 / JCM 9630 / CIP 104966 / NBRC 100827 / IM2)</name>
    <dbReference type="NCBI Taxonomy" id="178306"/>
    <lineage>
        <taxon>Archaea</taxon>
        <taxon>Thermoproteota</taxon>
        <taxon>Thermoprotei</taxon>
        <taxon>Thermoproteales</taxon>
        <taxon>Thermoproteaceae</taxon>
        <taxon>Pyrobaculum</taxon>
    </lineage>
</organism>
<reference key="1">
    <citation type="journal article" date="2002" name="Proc. Natl. Acad. Sci. U.S.A.">
        <title>Genome sequence of the hyperthermophilic crenarchaeon Pyrobaculum aerophilum.</title>
        <authorList>
            <person name="Fitz-Gibbon S.T."/>
            <person name="Ladner H."/>
            <person name="Kim U.-J."/>
            <person name="Stetter K.O."/>
            <person name="Simon M.I."/>
            <person name="Miller J.H."/>
        </authorList>
    </citation>
    <scope>NUCLEOTIDE SEQUENCE [LARGE SCALE GENOMIC DNA]</scope>
    <source>
        <strain>ATCC 51768 / DSM 7523 / JCM 9630 / CIP 104966 / NBRC 100827 / IM2</strain>
    </source>
</reference>
<protein>
    <recommendedName>
        <fullName evidence="1">Phenylalanine--tRNA ligase beta subunit</fullName>
        <ecNumber evidence="1">6.1.1.20</ecNumber>
    </recommendedName>
    <alternativeName>
        <fullName evidence="1">Phenylalanyl-tRNA synthetase beta subunit</fullName>
        <shortName evidence="1">PheRS</shortName>
    </alternativeName>
</protein>
<keyword id="KW-0030">Aminoacyl-tRNA synthetase</keyword>
<keyword id="KW-0067">ATP-binding</keyword>
<keyword id="KW-0963">Cytoplasm</keyword>
<keyword id="KW-0436">Ligase</keyword>
<keyword id="KW-0460">Magnesium</keyword>
<keyword id="KW-0479">Metal-binding</keyword>
<keyword id="KW-0547">Nucleotide-binding</keyword>
<keyword id="KW-0648">Protein biosynthesis</keyword>
<keyword id="KW-1185">Reference proteome</keyword>
<dbReference type="EC" id="6.1.1.20" evidence="1"/>
<dbReference type="EMBL" id="AE009441">
    <property type="protein sequence ID" value="AAL63643.1"/>
    <property type="molecule type" value="Genomic_DNA"/>
</dbReference>
<dbReference type="RefSeq" id="WP_011008116.1">
    <property type="nucleotide sequence ID" value="NC_003364.1"/>
</dbReference>
<dbReference type="SMR" id="Q8ZWQ7"/>
<dbReference type="FunCoup" id="Q8ZWQ7">
    <property type="interactions" value="273"/>
</dbReference>
<dbReference type="STRING" id="178306.PAE1669"/>
<dbReference type="EnsemblBacteria" id="AAL63643">
    <property type="protein sequence ID" value="AAL63643"/>
    <property type="gene ID" value="PAE1669"/>
</dbReference>
<dbReference type="GeneID" id="1465892"/>
<dbReference type="KEGG" id="pai:PAE1669"/>
<dbReference type="PATRIC" id="fig|178306.9.peg.1235"/>
<dbReference type="eggNOG" id="arCOG00412">
    <property type="taxonomic scope" value="Archaea"/>
</dbReference>
<dbReference type="HOGENOM" id="CLU_020279_3_0_2"/>
<dbReference type="InParanoid" id="Q8ZWQ7"/>
<dbReference type="Proteomes" id="UP000002439">
    <property type="component" value="Chromosome"/>
</dbReference>
<dbReference type="GO" id="GO:0009328">
    <property type="term" value="C:phenylalanine-tRNA ligase complex"/>
    <property type="evidence" value="ECO:0000318"/>
    <property type="project" value="GO_Central"/>
</dbReference>
<dbReference type="GO" id="GO:0005524">
    <property type="term" value="F:ATP binding"/>
    <property type="evidence" value="ECO:0007669"/>
    <property type="project" value="UniProtKB-UniRule"/>
</dbReference>
<dbReference type="GO" id="GO:0000287">
    <property type="term" value="F:magnesium ion binding"/>
    <property type="evidence" value="ECO:0007669"/>
    <property type="project" value="InterPro"/>
</dbReference>
<dbReference type="GO" id="GO:0004826">
    <property type="term" value="F:phenylalanine-tRNA ligase activity"/>
    <property type="evidence" value="ECO:0007669"/>
    <property type="project" value="UniProtKB-UniRule"/>
</dbReference>
<dbReference type="GO" id="GO:0003723">
    <property type="term" value="F:RNA binding"/>
    <property type="evidence" value="ECO:0007669"/>
    <property type="project" value="InterPro"/>
</dbReference>
<dbReference type="GO" id="GO:0006432">
    <property type="term" value="P:phenylalanyl-tRNA aminoacylation"/>
    <property type="evidence" value="ECO:0000318"/>
    <property type="project" value="GO_Central"/>
</dbReference>
<dbReference type="FunFam" id="3.30.56.10:FF:000011">
    <property type="entry name" value="Phenylalanine--tRNA ligase beta subunit"/>
    <property type="match status" value="1"/>
</dbReference>
<dbReference type="Gene3D" id="3.30.56.10">
    <property type="match status" value="2"/>
</dbReference>
<dbReference type="Gene3D" id="3.30.930.10">
    <property type="entry name" value="Bira Bifunctional Protein, Domain 2"/>
    <property type="match status" value="1"/>
</dbReference>
<dbReference type="Gene3D" id="3.50.40.10">
    <property type="entry name" value="Phenylalanyl-trna Synthetase, Chain B, domain 3"/>
    <property type="match status" value="1"/>
</dbReference>
<dbReference type="HAMAP" id="MF_00284">
    <property type="entry name" value="Phe_tRNA_synth_beta2"/>
    <property type="match status" value="1"/>
</dbReference>
<dbReference type="InterPro" id="IPR045864">
    <property type="entry name" value="aa-tRNA-synth_II/BPL/LPL"/>
</dbReference>
<dbReference type="InterPro" id="IPR005146">
    <property type="entry name" value="B3/B4_tRNA-bd"/>
</dbReference>
<dbReference type="InterPro" id="IPR009061">
    <property type="entry name" value="DNA-bd_dom_put_sf"/>
</dbReference>
<dbReference type="InterPro" id="IPR045060">
    <property type="entry name" value="Phe-tRNA-ligase_IIc_bsu"/>
</dbReference>
<dbReference type="InterPro" id="IPR004531">
    <property type="entry name" value="Phe-tRNA-synth_IIc_bsu_arc_euk"/>
</dbReference>
<dbReference type="InterPro" id="IPR020825">
    <property type="entry name" value="Phe-tRNA_synthase-like_B3/B4"/>
</dbReference>
<dbReference type="InterPro" id="IPR022918">
    <property type="entry name" value="Phe_tRNA_ligase_beta2_arc"/>
</dbReference>
<dbReference type="InterPro" id="IPR041616">
    <property type="entry name" value="PheRS_beta_core"/>
</dbReference>
<dbReference type="InterPro" id="IPR005147">
    <property type="entry name" value="tRNA_synthase_B5-dom"/>
</dbReference>
<dbReference type="NCBIfam" id="TIGR00471">
    <property type="entry name" value="pheT_arch"/>
    <property type="match status" value="1"/>
</dbReference>
<dbReference type="PANTHER" id="PTHR10947:SF0">
    <property type="entry name" value="PHENYLALANINE--TRNA LIGASE BETA SUBUNIT"/>
    <property type="match status" value="1"/>
</dbReference>
<dbReference type="PANTHER" id="PTHR10947">
    <property type="entry name" value="PHENYLALANYL-TRNA SYNTHETASE BETA CHAIN AND LEUCINE-RICH REPEAT-CONTAINING PROTEIN 47"/>
    <property type="match status" value="1"/>
</dbReference>
<dbReference type="Pfam" id="PF03484">
    <property type="entry name" value="B5"/>
    <property type="match status" value="1"/>
</dbReference>
<dbReference type="Pfam" id="PF17759">
    <property type="entry name" value="tRNA_synthFbeta"/>
    <property type="match status" value="1"/>
</dbReference>
<dbReference type="SMART" id="SM00873">
    <property type="entry name" value="B3_4"/>
    <property type="match status" value="1"/>
</dbReference>
<dbReference type="SMART" id="SM00874">
    <property type="entry name" value="B5"/>
    <property type="match status" value="1"/>
</dbReference>
<dbReference type="SUPFAM" id="SSF55681">
    <property type="entry name" value="Class II aaRS and biotin synthetases"/>
    <property type="match status" value="1"/>
</dbReference>
<dbReference type="SUPFAM" id="SSF56037">
    <property type="entry name" value="PheT/TilS domain"/>
    <property type="match status" value="1"/>
</dbReference>
<dbReference type="SUPFAM" id="SSF46955">
    <property type="entry name" value="Putative DNA-binding domain"/>
    <property type="match status" value="2"/>
</dbReference>
<dbReference type="PROSITE" id="PS51483">
    <property type="entry name" value="B5"/>
    <property type="match status" value="1"/>
</dbReference>
<feature type="chain" id="PRO_0000127007" description="Phenylalanine--tRNA ligase beta subunit">
    <location>
        <begin position="1"/>
        <end position="515"/>
    </location>
</feature>
<feature type="domain" description="B5" evidence="1">
    <location>
        <begin position="263"/>
        <end position="334"/>
    </location>
</feature>
<feature type="binding site" evidence="1">
    <location>
        <position position="312"/>
    </location>
    <ligand>
        <name>Mg(2+)</name>
        <dbReference type="ChEBI" id="CHEBI:18420"/>
        <note>shared with alpha subunit</note>
    </ligand>
</feature>
<feature type="binding site" evidence="1">
    <location>
        <position position="318"/>
    </location>
    <ligand>
        <name>Mg(2+)</name>
        <dbReference type="ChEBI" id="CHEBI:18420"/>
        <note>shared with alpha subunit</note>
    </ligand>
</feature>
<feature type="binding site" evidence="1">
    <location>
        <position position="321"/>
    </location>
    <ligand>
        <name>Mg(2+)</name>
        <dbReference type="ChEBI" id="CHEBI:18420"/>
        <note>shared with alpha subunit</note>
    </ligand>
</feature>
<feature type="binding site" evidence="1">
    <location>
        <position position="322"/>
    </location>
    <ligand>
        <name>Mg(2+)</name>
        <dbReference type="ChEBI" id="CHEBI:18420"/>
        <note>shared with alpha subunit</note>
    </ligand>
</feature>
<name>SYFB_PYRAE</name>
<proteinExistence type="inferred from homology"/>
<sequence>MPVIDVAKSDLERLTGLKYEEIAKLFEYIKGEIESDSGERLRIEVTHDRPDHFSAEGLAKTLKGIAEIEVGLPRISLGRSSIRLVAESITERPYIAMAVVRNVRLDEEAIKQMIQLQEKLHETYGRGRRKIAIGFYDVSKIKPPIYYRRISQEDEYIPLGFQKPVKVREMYELTEQGRRYSGLINRENPPALVDASGQIMVVIPVLGSECCKITEATRDVLIDVTGTDHRAVANALSILIYSLLERSGSKEVEIVEGGTGYSHEYVKIYVDERAVSEFLGVKIAHEDFIKYIKKARFDYQEGAVIIPPYRINVLSWVDVAEDVAIVMGYNQMPREVPEIPSAGRRHRTEVITLEVRKSMLSMGFTELNNYVLTDEAVAEVCSPARVANPISELYTTIRCSIITQLISAASALKRRETKIFEVGEVVREGRTVRALAFLISRDGATLTDGLSVVKSLCKRLGLKCEFFPAEAKWALPNRMAEVRGEITGYIAEVNPDVLTALKHAVPTVVAELYIG</sequence>
<evidence type="ECO:0000255" key="1">
    <source>
        <dbReference type="HAMAP-Rule" id="MF_00284"/>
    </source>
</evidence>
<evidence type="ECO:0000305" key="2"/>
<accession>Q8ZWQ7</accession>
<gene>
    <name evidence="1" type="primary">pheT</name>
    <name type="ordered locus">PAE1669</name>
</gene>
<comment type="catalytic activity">
    <reaction evidence="1">
        <text>tRNA(Phe) + L-phenylalanine + ATP = L-phenylalanyl-tRNA(Phe) + AMP + diphosphate + H(+)</text>
        <dbReference type="Rhea" id="RHEA:19413"/>
        <dbReference type="Rhea" id="RHEA-COMP:9668"/>
        <dbReference type="Rhea" id="RHEA-COMP:9699"/>
        <dbReference type="ChEBI" id="CHEBI:15378"/>
        <dbReference type="ChEBI" id="CHEBI:30616"/>
        <dbReference type="ChEBI" id="CHEBI:33019"/>
        <dbReference type="ChEBI" id="CHEBI:58095"/>
        <dbReference type="ChEBI" id="CHEBI:78442"/>
        <dbReference type="ChEBI" id="CHEBI:78531"/>
        <dbReference type="ChEBI" id="CHEBI:456215"/>
        <dbReference type="EC" id="6.1.1.20"/>
    </reaction>
</comment>
<comment type="cofactor">
    <cofactor evidence="1">
        <name>Mg(2+)</name>
        <dbReference type="ChEBI" id="CHEBI:18420"/>
    </cofactor>
</comment>
<comment type="subunit">
    <text evidence="1">Tetramer of two alpha and two beta subunits.</text>
</comment>
<comment type="subcellular location">
    <subcellularLocation>
        <location evidence="1">Cytoplasm</location>
    </subcellularLocation>
</comment>
<comment type="similarity">
    <text evidence="1 2">Belongs to the phenylalanyl-tRNA synthetase beta subunit family. Type 2 subfamily.</text>
</comment>